<reference key="1">
    <citation type="journal article" date="2006" name="Mol. Microbiol.">
        <title>Role of pathogenicity island-associated integrases in the genome plasticity of uropathogenic Escherichia coli strain 536.</title>
        <authorList>
            <person name="Hochhut B."/>
            <person name="Wilde C."/>
            <person name="Balling G."/>
            <person name="Middendorf B."/>
            <person name="Dobrindt U."/>
            <person name="Brzuszkiewicz E."/>
            <person name="Gottschalk G."/>
            <person name="Carniel E."/>
            <person name="Hacker J."/>
        </authorList>
    </citation>
    <scope>NUCLEOTIDE SEQUENCE [LARGE SCALE GENOMIC DNA]</scope>
    <source>
        <strain>536 / UPEC</strain>
    </source>
</reference>
<comment type="function">
    <text evidence="1">Specifically methylates the guanosine in position 1516 of 16S rRNA.</text>
</comment>
<comment type="catalytic activity">
    <reaction evidence="1">
        <text>guanosine(1516) in 16S rRNA + S-adenosyl-L-methionine = N(2)-methylguanosine(1516) in 16S rRNA + S-adenosyl-L-homocysteine + H(+)</text>
        <dbReference type="Rhea" id="RHEA:43220"/>
        <dbReference type="Rhea" id="RHEA-COMP:10412"/>
        <dbReference type="Rhea" id="RHEA-COMP:10413"/>
        <dbReference type="ChEBI" id="CHEBI:15378"/>
        <dbReference type="ChEBI" id="CHEBI:57856"/>
        <dbReference type="ChEBI" id="CHEBI:59789"/>
        <dbReference type="ChEBI" id="CHEBI:74269"/>
        <dbReference type="ChEBI" id="CHEBI:74481"/>
        <dbReference type="EC" id="2.1.1.242"/>
    </reaction>
</comment>
<comment type="subcellular location">
    <subcellularLocation>
        <location evidence="1">Cytoplasm</location>
    </subcellularLocation>
</comment>
<comment type="similarity">
    <text evidence="1">Belongs to the methyltransferase superfamily. RsmJ family.</text>
</comment>
<comment type="sequence caution" evidence="2">
    <conflict type="erroneous initiation">
        <sequence resource="EMBL-CDS" id="ABG71563"/>
    </conflict>
    <text>Extended N-terminus.</text>
</comment>
<dbReference type="EC" id="2.1.1.242" evidence="1"/>
<dbReference type="EMBL" id="CP000247">
    <property type="protein sequence ID" value="ABG71563.1"/>
    <property type="status" value="ALT_INIT"/>
    <property type="molecule type" value="Genomic_DNA"/>
</dbReference>
<dbReference type="RefSeq" id="WP_000686607.1">
    <property type="nucleotide sequence ID" value="NC_008253.1"/>
</dbReference>
<dbReference type="SMR" id="Q0TBW6"/>
<dbReference type="KEGG" id="ecp:ECP_3587"/>
<dbReference type="HOGENOM" id="CLU_076324_0_0_6"/>
<dbReference type="Proteomes" id="UP000009182">
    <property type="component" value="Chromosome"/>
</dbReference>
<dbReference type="GO" id="GO:0005737">
    <property type="term" value="C:cytoplasm"/>
    <property type="evidence" value="ECO:0007669"/>
    <property type="project" value="UniProtKB-SubCell"/>
</dbReference>
<dbReference type="GO" id="GO:0008990">
    <property type="term" value="F:rRNA (guanine-N2-)-methyltransferase activity"/>
    <property type="evidence" value="ECO:0007669"/>
    <property type="project" value="UniProtKB-UniRule"/>
</dbReference>
<dbReference type="CDD" id="cd02440">
    <property type="entry name" value="AdoMet_MTases"/>
    <property type="match status" value="1"/>
</dbReference>
<dbReference type="FunFam" id="3.40.1630.10:FF:000001">
    <property type="entry name" value="Ribosomal RNA small subunit methyltransferase J"/>
    <property type="match status" value="1"/>
</dbReference>
<dbReference type="FunFam" id="3.40.50.150:FF:000072">
    <property type="entry name" value="Ribosomal RNA small subunit methyltransferase J"/>
    <property type="match status" value="1"/>
</dbReference>
<dbReference type="Gene3D" id="3.40.50.150">
    <property type="entry name" value="Vaccinia Virus protein VP39"/>
    <property type="match status" value="1"/>
</dbReference>
<dbReference type="Gene3D" id="3.40.1630.10">
    <property type="entry name" value="YhiQ-like domain"/>
    <property type="match status" value="1"/>
</dbReference>
<dbReference type="HAMAP" id="MF_01523">
    <property type="entry name" value="16SrRNA_methyltr_J"/>
    <property type="match status" value="1"/>
</dbReference>
<dbReference type="InterPro" id="IPR007536">
    <property type="entry name" value="16SrRNA_methylTrfase_J"/>
</dbReference>
<dbReference type="InterPro" id="IPR029063">
    <property type="entry name" value="SAM-dependent_MTases_sf"/>
</dbReference>
<dbReference type="NCBIfam" id="NF008012">
    <property type="entry name" value="PRK10742.1"/>
    <property type="match status" value="1"/>
</dbReference>
<dbReference type="PANTHER" id="PTHR36112">
    <property type="entry name" value="RIBOSOMAL RNA SMALL SUBUNIT METHYLTRANSFERASE J"/>
    <property type="match status" value="1"/>
</dbReference>
<dbReference type="PANTHER" id="PTHR36112:SF1">
    <property type="entry name" value="RIBOSOMAL RNA SMALL SUBUNIT METHYLTRANSFERASE J"/>
    <property type="match status" value="1"/>
</dbReference>
<dbReference type="Pfam" id="PF04445">
    <property type="entry name" value="SAM_MT"/>
    <property type="match status" value="1"/>
</dbReference>
<dbReference type="SUPFAM" id="SSF53335">
    <property type="entry name" value="S-adenosyl-L-methionine-dependent methyltransferases"/>
    <property type="match status" value="1"/>
</dbReference>
<organism>
    <name type="scientific">Escherichia coli O6:K15:H31 (strain 536 / UPEC)</name>
    <dbReference type="NCBI Taxonomy" id="362663"/>
    <lineage>
        <taxon>Bacteria</taxon>
        <taxon>Pseudomonadati</taxon>
        <taxon>Pseudomonadota</taxon>
        <taxon>Gammaproteobacteria</taxon>
        <taxon>Enterobacterales</taxon>
        <taxon>Enterobacteriaceae</taxon>
        <taxon>Escherichia</taxon>
    </lineage>
</organism>
<sequence>MKICLIDETGAGDGALSVLAARWGLEHDEDNLMALVLTPEHLELRKRDEPKLGGIFVDFVGGAMAHRRKFGGGRGEAVAKAVGIKGDYLPDVVDATAGLGRDAFVLASVGCRVRMLERNPVVAALLDDGLARGYADAEIGGWLQERLQLIHASSLTALSDITPRPQVVYLDPMFPHKQKSALVKKEMRVFQSLVGPDLDADGLLEPARLLATKRVVVKRPDYAPPLANVATPNAVVTKGHRFDIYAGTPV</sequence>
<accession>Q0TBW6</accession>
<evidence type="ECO:0000255" key="1">
    <source>
        <dbReference type="HAMAP-Rule" id="MF_01523"/>
    </source>
</evidence>
<evidence type="ECO:0000305" key="2"/>
<name>RSMJ_ECOL5</name>
<protein>
    <recommendedName>
        <fullName evidence="1">Ribosomal RNA small subunit methyltransferase J</fullName>
        <ecNumber evidence="1">2.1.1.242</ecNumber>
    </recommendedName>
    <alternativeName>
        <fullName evidence="1">16S rRNA m2G1516 methyltransferase</fullName>
    </alternativeName>
    <alternativeName>
        <fullName evidence="1">rRNA (guanine-N(2)-)-methyltransferase</fullName>
    </alternativeName>
</protein>
<proteinExistence type="inferred from homology"/>
<feature type="chain" id="PRO_0000292629" description="Ribosomal RNA small subunit methyltransferase J">
    <location>
        <begin position="1"/>
        <end position="250"/>
    </location>
</feature>
<feature type="binding site" evidence="1">
    <location>
        <begin position="101"/>
        <end position="102"/>
    </location>
    <ligand>
        <name>S-adenosyl-L-methionine</name>
        <dbReference type="ChEBI" id="CHEBI:59789"/>
    </ligand>
</feature>
<feature type="binding site" evidence="1">
    <location>
        <begin position="117"/>
        <end position="118"/>
    </location>
    <ligand>
        <name>S-adenosyl-L-methionine</name>
        <dbReference type="ChEBI" id="CHEBI:59789"/>
    </ligand>
</feature>
<feature type="binding site" evidence="1">
    <location>
        <begin position="153"/>
        <end position="154"/>
    </location>
    <ligand>
        <name>S-adenosyl-L-methionine</name>
        <dbReference type="ChEBI" id="CHEBI:59789"/>
    </ligand>
</feature>
<feature type="binding site" evidence="1">
    <location>
        <position position="171"/>
    </location>
    <ligand>
        <name>S-adenosyl-L-methionine</name>
        <dbReference type="ChEBI" id="CHEBI:59789"/>
    </ligand>
</feature>
<keyword id="KW-0963">Cytoplasm</keyword>
<keyword id="KW-0489">Methyltransferase</keyword>
<keyword id="KW-0698">rRNA processing</keyword>
<keyword id="KW-0949">S-adenosyl-L-methionine</keyword>
<keyword id="KW-0808">Transferase</keyword>
<gene>
    <name evidence="1" type="primary">rsmJ</name>
    <name type="synonym">yhiQ</name>
    <name type="ordered locus">ECP_3587</name>
</gene>